<reference key="1">
    <citation type="journal article" date="2005" name="Nucleic Acids Res.">
        <title>Genome dynamics and diversity of Shigella species, the etiologic agents of bacillary dysentery.</title>
        <authorList>
            <person name="Yang F."/>
            <person name="Yang J."/>
            <person name="Zhang X."/>
            <person name="Chen L."/>
            <person name="Jiang Y."/>
            <person name="Yan Y."/>
            <person name="Tang X."/>
            <person name="Wang J."/>
            <person name="Xiong Z."/>
            <person name="Dong J."/>
            <person name="Xue Y."/>
            <person name="Zhu Y."/>
            <person name="Xu X."/>
            <person name="Sun L."/>
            <person name="Chen S."/>
            <person name="Nie H."/>
            <person name="Peng J."/>
            <person name="Xu J."/>
            <person name="Wang Y."/>
            <person name="Yuan Z."/>
            <person name="Wen Y."/>
            <person name="Yao Z."/>
            <person name="Shen Y."/>
            <person name="Qiang B."/>
            <person name="Hou Y."/>
            <person name="Yu J."/>
            <person name="Jin Q."/>
        </authorList>
    </citation>
    <scope>NUCLEOTIDE SEQUENCE [LARGE SCALE GENOMIC DNA]</scope>
    <source>
        <strain>Ss046</strain>
    </source>
</reference>
<name>TIG_SHISS</name>
<sequence length="432" mass="48193">MQVSVETTQGLGRRVTITIAADSIETAVKSELVNVAKKVRIDGFRKGKVPMNIVAQRYGASVRQDVLGDLMSRNFIDAIIKEKINPAGAPTYVPGEYKLGEDFTYSVEFEVYPEVELQGLEAIEVEKPIVEVTDADVDGMLDTLRKQQATWKEKDGAVEAEDRVTIDFTGSVDGEEFEGGKASDFVLAMGQGRMIPGFEDGIKGHKAGEEFTIDVTFPEEYHAENLKGKAAKFAINLKKVEERELPELTAEFIKRFGVEDGSVEGLRAEVRKNMERELKSAIRNRVKSQAIEGLVKANDIDVPAALIDSEIDVLRRQAAQRFGGNEKQALELPRELFEEQAKRRVVVGLLLGEVIRTNELKADEERVKGLIEEMASAYEDPKEVIEFYSKNKELMDNMRNVALEEQAVEAVLAKAKVTEKETTFNELMNQQA</sequence>
<comment type="function">
    <text evidence="1">Involved in protein export. Acts as a chaperone by maintaining the newly synthesized protein in an open conformation. Functions as a peptidyl-prolyl cis-trans isomerase.</text>
</comment>
<comment type="catalytic activity">
    <reaction evidence="1">
        <text>[protein]-peptidylproline (omega=180) = [protein]-peptidylproline (omega=0)</text>
        <dbReference type="Rhea" id="RHEA:16237"/>
        <dbReference type="Rhea" id="RHEA-COMP:10747"/>
        <dbReference type="Rhea" id="RHEA-COMP:10748"/>
        <dbReference type="ChEBI" id="CHEBI:83833"/>
        <dbReference type="ChEBI" id="CHEBI:83834"/>
        <dbReference type="EC" id="5.2.1.8"/>
    </reaction>
</comment>
<comment type="subunit">
    <text evidence="1">Homodimer and monomer. In vivo most of the ribosomes are in complex with monomeric TF. Uncomplexed TF, however, is in a monomer-dimer equilibrium with approximately two thirds of TF existing in a dimeric state.</text>
</comment>
<comment type="subcellular location">
    <subcellularLocation>
        <location>Cytoplasm</location>
    </subcellularLocation>
    <text evidence="1">About half TF is bound to the ribosome near the polypeptide exit tunnel while the other half is free in the cytoplasm.</text>
</comment>
<comment type="domain">
    <text evidence="1">Consists of 3 domains; the N-terminus binds the ribosome, the middle domain has PPIase activity, while the C-terminus has intrinsic chaperone activity on its own.</text>
</comment>
<comment type="similarity">
    <text evidence="1">Belongs to the FKBP-type PPIase family. Tig subfamily.</text>
</comment>
<proteinExistence type="inferred from homology"/>
<accession>Q3Z4W7</accession>
<organism>
    <name type="scientific">Shigella sonnei (strain Ss046)</name>
    <dbReference type="NCBI Taxonomy" id="300269"/>
    <lineage>
        <taxon>Bacteria</taxon>
        <taxon>Pseudomonadati</taxon>
        <taxon>Pseudomonadota</taxon>
        <taxon>Gammaproteobacteria</taxon>
        <taxon>Enterobacterales</taxon>
        <taxon>Enterobacteriaceae</taxon>
        <taxon>Shigella</taxon>
    </lineage>
</organism>
<keyword id="KW-0131">Cell cycle</keyword>
<keyword id="KW-0132">Cell division</keyword>
<keyword id="KW-0143">Chaperone</keyword>
<keyword id="KW-0963">Cytoplasm</keyword>
<keyword id="KW-0413">Isomerase</keyword>
<keyword id="KW-1185">Reference proteome</keyword>
<keyword id="KW-0697">Rotamase</keyword>
<gene>
    <name evidence="1" type="primary">tig</name>
    <name type="ordered locus">SSON_0419</name>
</gene>
<feature type="chain" id="PRO_0000256617" description="Trigger factor">
    <location>
        <begin position="1"/>
        <end position="432"/>
    </location>
</feature>
<feature type="domain" description="PPIase FKBP-type" evidence="1">
    <location>
        <begin position="161"/>
        <end position="246"/>
    </location>
</feature>
<dbReference type="EC" id="5.2.1.8" evidence="1"/>
<dbReference type="EMBL" id="CP000038">
    <property type="protein sequence ID" value="AAZ87195.1"/>
    <property type="molecule type" value="Genomic_DNA"/>
</dbReference>
<dbReference type="RefSeq" id="WP_001198386.1">
    <property type="nucleotide sequence ID" value="NC_007384.1"/>
</dbReference>
<dbReference type="SMR" id="Q3Z4W7"/>
<dbReference type="GeneID" id="75202861"/>
<dbReference type="KEGG" id="ssn:SSON_0419"/>
<dbReference type="HOGENOM" id="CLU_033058_2_0_6"/>
<dbReference type="Proteomes" id="UP000002529">
    <property type="component" value="Chromosome"/>
</dbReference>
<dbReference type="GO" id="GO:0005737">
    <property type="term" value="C:cytoplasm"/>
    <property type="evidence" value="ECO:0007669"/>
    <property type="project" value="UniProtKB-SubCell"/>
</dbReference>
<dbReference type="GO" id="GO:0003755">
    <property type="term" value="F:peptidyl-prolyl cis-trans isomerase activity"/>
    <property type="evidence" value="ECO:0007669"/>
    <property type="project" value="UniProtKB-UniRule"/>
</dbReference>
<dbReference type="GO" id="GO:0044183">
    <property type="term" value="F:protein folding chaperone"/>
    <property type="evidence" value="ECO:0007669"/>
    <property type="project" value="TreeGrafter"/>
</dbReference>
<dbReference type="GO" id="GO:0043022">
    <property type="term" value="F:ribosome binding"/>
    <property type="evidence" value="ECO:0007669"/>
    <property type="project" value="TreeGrafter"/>
</dbReference>
<dbReference type="GO" id="GO:0051083">
    <property type="term" value="P:'de novo' cotranslational protein folding"/>
    <property type="evidence" value="ECO:0007669"/>
    <property type="project" value="TreeGrafter"/>
</dbReference>
<dbReference type="GO" id="GO:0051301">
    <property type="term" value="P:cell division"/>
    <property type="evidence" value="ECO:0007669"/>
    <property type="project" value="UniProtKB-KW"/>
</dbReference>
<dbReference type="GO" id="GO:0061077">
    <property type="term" value="P:chaperone-mediated protein folding"/>
    <property type="evidence" value="ECO:0007669"/>
    <property type="project" value="TreeGrafter"/>
</dbReference>
<dbReference type="GO" id="GO:0015031">
    <property type="term" value="P:protein transport"/>
    <property type="evidence" value="ECO:0007669"/>
    <property type="project" value="UniProtKB-UniRule"/>
</dbReference>
<dbReference type="GO" id="GO:0043335">
    <property type="term" value="P:protein unfolding"/>
    <property type="evidence" value="ECO:0007669"/>
    <property type="project" value="TreeGrafter"/>
</dbReference>
<dbReference type="FunFam" id="1.10.3120.10:FF:000001">
    <property type="entry name" value="Trigger factor"/>
    <property type="match status" value="1"/>
</dbReference>
<dbReference type="FunFam" id="3.10.50.40:FF:000001">
    <property type="entry name" value="Trigger factor"/>
    <property type="match status" value="1"/>
</dbReference>
<dbReference type="FunFam" id="3.30.70.1050:FF:000001">
    <property type="entry name" value="Trigger factor"/>
    <property type="match status" value="1"/>
</dbReference>
<dbReference type="Gene3D" id="3.10.50.40">
    <property type="match status" value="1"/>
</dbReference>
<dbReference type="Gene3D" id="3.30.70.1050">
    <property type="entry name" value="Trigger factor ribosome-binding domain"/>
    <property type="match status" value="1"/>
</dbReference>
<dbReference type="Gene3D" id="1.10.3120.10">
    <property type="entry name" value="Trigger factor, C-terminal domain"/>
    <property type="match status" value="1"/>
</dbReference>
<dbReference type="HAMAP" id="MF_00303">
    <property type="entry name" value="Trigger_factor_Tig"/>
    <property type="match status" value="1"/>
</dbReference>
<dbReference type="InterPro" id="IPR046357">
    <property type="entry name" value="PPIase_dom_sf"/>
</dbReference>
<dbReference type="InterPro" id="IPR001179">
    <property type="entry name" value="PPIase_FKBP_dom"/>
</dbReference>
<dbReference type="InterPro" id="IPR005215">
    <property type="entry name" value="Trig_fac"/>
</dbReference>
<dbReference type="InterPro" id="IPR008880">
    <property type="entry name" value="Trigger_fac_C"/>
</dbReference>
<dbReference type="InterPro" id="IPR037041">
    <property type="entry name" value="Trigger_fac_C_sf"/>
</dbReference>
<dbReference type="InterPro" id="IPR008881">
    <property type="entry name" value="Trigger_fac_ribosome-bd_bac"/>
</dbReference>
<dbReference type="InterPro" id="IPR036611">
    <property type="entry name" value="Trigger_fac_ribosome-bd_sf"/>
</dbReference>
<dbReference type="InterPro" id="IPR027304">
    <property type="entry name" value="Trigger_fact/SurA_dom_sf"/>
</dbReference>
<dbReference type="NCBIfam" id="TIGR00115">
    <property type="entry name" value="tig"/>
    <property type="match status" value="1"/>
</dbReference>
<dbReference type="PANTHER" id="PTHR30560">
    <property type="entry name" value="TRIGGER FACTOR CHAPERONE AND PEPTIDYL-PROLYL CIS/TRANS ISOMERASE"/>
    <property type="match status" value="1"/>
</dbReference>
<dbReference type="PANTHER" id="PTHR30560:SF3">
    <property type="entry name" value="TRIGGER FACTOR-LIKE PROTEIN TIG, CHLOROPLASTIC"/>
    <property type="match status" value="1"/>
</dbReference>
<dbReference type="Pfam" id="PF00254">
    <property type="entry name" value="FKBP_C"/>
    <property type="match status" value="1"/>
</dbReference>
<dbReference type="Pfam" id="PF05698">
    <property type="entry name" value="Trigger_C"/>
    <property type="match status" value="1"/>
</dbReference>
<dbReference type="Pfam" id="PF05697">
    <property type="entry name" value="Trigger_N"/>
    <property type="match status" value="1"/>
</dbReference>
<dbReference type="PIRSF" id="PIRSF003095">
    <property type="entry name" value="Trigger_factor"/>
    <property type="match status" value="1"/>
</dbReference>
<dbReference type="SUPFAM" id="SSF54534">
    <property type="entry name" value="FKBP-like"/>
    <property type="match status" value="1"/>
</dbReference>
<dbReference type="SUPFAM" id="SSF109998">
    <property type="entry name" value="Triger factor/SurA peptide-binding domain-like"/>
    <property type="match status" value="1"/>
</dbReference>
<dbReference type="SUPFAM" id="SSF102735">
    <property type="entry name" value="Trigger factor ribosome-binding domain"/>
    <property type="match status" value="1"/>
</dbReference>
<dbReference type="PROSITE" id="PS50059">
    <property type="entry name" value="FKBP_PPIASE"/>
    <property type="match status" value="1"/>
</dbReference>
<evidence type="ECO:0000255" key="1">
    <source>
        <dbReference type="HAMAP-Rule" id="MF_00303"/>
    </source>
</evidence>
<protein>
    <recommendedName>
        <fullName evidence="1">Trigger factor</fullName>
        <shortName evidence="1">TF</shortName>
        <ecNumber evidence="1">5.2.1.8</ecNumber>
    </recommendedName>
    <alternativeName>
        <fullName evidence="1">PPIase</fullName>
    </alternativeName>
</protein>